<name>HLOAD_BPT4</name>
<reference key="1">
    <citation type="journal article" date="1989" name="Nucleic Acids Res.">
        <title>Organization of the bacteriophage T4 genome between map positions 150.745 and 145.824.</title>
        <authorList>
            <person name="Hahn S."/>
            <person name="Rueger W."/>
        </authorList>
    </citation>
    <scope>NUCLEOTIDE SEQUENCE [GENOMIC DNA]</scope>
    <source>
        <strain>BK536</strain>
    </source>
</reference>
<reference key="2">
    <citation type="journal article" date="2003" name="Microbiol. Mol. Biol. Rev.">
        <title>Bacteriophage T4 genome.</title>
        <authorList>
            <person name="Miller E.S."/>
            <person name="Kutter E."/>
            <person name="Mosig G."/>
            <person name="Arisaka F."/>
            <person name="Kunisawa T."/>
            <person name="Ruger W."/>
        </authorList>
    </citation>
    <scope>NUCLEOTIDE SEQUENCE [LARGE SCALE GENOMIC DNA]</scope>
</reference>
<reference key="3">
    <citation type="journal article" date="1994" name="J. Biol. Chem.">
        <title>The purification and characterization of gene 59 protein from bacteriophage T4.</title>
        <authorList>
            <person name="Yonesaki T."/>
        </authorList>
    </citation>
    <scope>PROTEIN SEQUENCE OF 1-7</scope>
    <scope>CHARACTERIZATION</scope>
</reference>
<reference key="4">
    <citation type="journal article" date="1994" name="J. Biol. Chem.">
        <title>Purification and characterization of bacteriophage T4 gene 59 protein. A DNA helicase assembly protein involved in DNA replication.</title>
        <authorList>
            <person name="Barry J."/>
            <person name="Alberts B."/>
        </authorList>
    </citation>
    <scope>INTERACTION WITH THE SINGLE-STRANDED DNA-BINDING PROTEIN</scope>
    <scope>FUNCTION</scope>
    <scope>INTERACTION WITH THE DNAB-LIKE REPLICATIVE HELICASE</scope>
</reference>
<reference key="5">
    <citation type="journal article" date="2000" name="J. Biol. Chem.">
        <title>Interaction of the bacteriophage T4 gene 59 helicase loading protein and gene 41 helicase with each other and with fork, flap, and cruciform DNA.</title>
        <authorList>
            <person name="Jones C.E."/>
            <person name="Mueser T.C."/>
            <person name="Nossal N.G."/>
        </authorList>
    </citation>
    <scope>INTERACTION WITH THE DNAB-LIKE REPLICATIVE HELICASE</scope>
    <scope>FUNCTION</scope>
</reference>
<reference key="6">
    <citation type="journal article" date="2001" name="Proc. Natl. Acad. Sci. U.S.A.">
        <title>Mediator proteins orchestrate enzyme-ssDNA assembly during T4 recombination-dependent DNA replication and repair.</title>
        <authorList>
            <person name="Bleuit J.S."/>
            <person name="Xu H."/>
            <person name="Ma Y."/>
            <person name="Wang T."/>
            <person name="Liu J."/>
            <person name="Morrical S.W."/>
        </authorList>
    </citation>
    <scope>FUNCTION</scope>
    <scope>INTERACTION WITH THE DNAB-LIKE REPLICATIVE HELICASE</scope>
    <scope>INTERACTION WITH THE SINGLE-STRANDED DNA-BINDING PROTEIN</scope>
</reference>
<reference key="7">
    <citation type="journal article" date="2001" name="Proc. Natl. Acad. Sci. U.S.A.">
        <title>Bacteriophage T4 gene 41 helicase and gene 59 helicase-loading protein: a versatile couple with roles in replication and recombination.</title>
        <authorList>
            <person name="Jones C.E."/>
            <person name="Mueser T.C."/>
            <person name="Dudas K.C."/>
            <person name="Kreuzer K.N."/>
            <person name="Nossal N.G."/>
        </authorList>
    </citation>
    <scope>REVIEW</scope>
</reference>
<reference key="8">
    <citation type="journal article" date="2004" name="Virol. J.">
        <title>Divergence of the mRNA targets for the Ssb proteins of bacteriophages T4 and RB69.</title>
        <authorList>
            <person name="Borjac-Natour J.M."/>
            <person name="Petrov V.M."/>
            <person name="Karam J.D."/>
        </authorList>
    </citation>
    <scope>INTERACTION WITH THE SINGLE-STRANDED DNA-BINDING PROTEIN</scope>
</reference>
<reference key="9">
    <citation type="journal article" date="2005" name="Biochemistry">
        <title>Interaction between the T4 helicase loading protein (gp59) and the DNA polymerase (gp43): unlocking of the gp59-gp43-DNA complex to initiate assembly of a fully functional replisome.</title>
        <authorList>
            <person name="Xi J."/>
            <person name="Zhang Z."/>
            <person name="Zhuang Z."/>
            <person name="Yang J."/>
            <person name="Spiering M.M."/>
            <person name="Hammes G.G."/>
            <person name="Benkovic S.J."/>
        </authorList>
    </citation>
    <scope>INTERACTION WITH THE VIRAL DNA POLYMERASE</scope>
</reference>
<reference key="10">
    <citation type="journal article" date="2006" name="Biochemistry">
        <title>Single-molecule investigation of the T4 bacteriophage DNA polymerase holoenzyme: multiple pathways of holoenzyme formation.</title>
        <authorList>
            <person name="Smiley R.D."/>
            <person name="Zhuang Z."/>
            <person name="Benkovic S.J."/>
            <person name="Hammes G.G."/>
        </authorList>
    </citation>
    <scope>IDENTIFICATION IN THE REPLICASE COMPLEX</scope>
</reference>
<reference key="11">
    <citation type="journal article" date="2009" name="J. Biol. Chem.">
        <title>Investigation of stoichiometry of T4 bacteriophage helicase loader protein (gp59).</title>
        <authorList>
            <person name="Arumugam S.R."/>
            <person name="Lee T.H."/>
            <person name="Benkovic S.J."/>
        </authorList>
    </citation>
    <scope>SUBUNIT</scope>
</reference>
<reference key="12">
    <citation type="journal article" date="2012" name="J. Biol. Chem.">
        <title>Mutational analysis of the T4 gp59 helicase loader reveals its sites for interaction with helicase, single-stranded binding protein, and DNA.</title>
        <authorList>
            <person name="Dolezal D."/>
            <person name="Jones C.E."/>
            <person name="Lai X."/>
            <person name="Brister J.R."/>
            <person name="Mueser T.C."/>
            <person name="Nossal N.G."/>
            <person name="Hinton D.M."/>
        </authorList>
    </citation>
    <scope>FUNCTION</scope>
    <scope>MUTAGENESIS OF LYS-27; LYS-38; TYR-39; ASP-47; ILE-87; TYR-122; PHE-132; TYR-138; ASN-139; TYR-193; VAL-207; LYS-216 AND TYR-217</scope>
</reference>
<reference key="13">
    <citation type="journal article" date="2014" name="J. Biol. Chem.">
        <title>Control of helicase loading in the coupled DNA replication and recombination systems of bacteriophage T4.</title>
        <authorList>
            <person name="Branagan A.M."/>
            <person name="Klein J.A."/>
            <person name="Jordan C.S."/>
            <person name="Morrical S.W."/>
        </authorList>
    </citation>
    <scope>INTERACTION WITH THE SINGLE-STRANDED DNA-BINDING PROTEIN</scope>
    <scope>MUTAGENESIS OF ILE-87</scope>
</reference>
<reference evidence="17" key="14">
    <citation type="journal article" date="2000" name="J. Mol. Biol.">
        <title>Bacteriophage T4 gene 59 helicase assembly protein binds replication fork DNA. The 1.45 A resolution crystal structure reveals a novel alpha-helical two-domain fold.</title>
        <authorList>
            <person name="Mueser T.C."/>
            <person name="Jones C.E."/>
            <person name="Nossal N.G."/>
            <person name="Hyde C.C."/>
        </authorList>
    </citation>
    <scope>X-RAY CRYSTALLOGRAPHY (1.45 ANGSTROMS)</scope>
    <scope>DNA-BINDING</scope>
</reference>
<proteinExistence type="evidence at protein level"/>
<protein>
    <recommendedName>
        <fullName evidence="1 15">DNA helicase assembly protein</fullName>
    </recommendedName>
    <alternativeName>
        <fullName evidence="1">Gene product 59</fullName>
        <shortName evidence="1">Gp59</shortName>
    </alternativeName>
    <alternativeName>
        <fullName evidence="1 14">Helicase loader</fullName>
    </alternativeName>
    <alternativeName>
        <fullName evidence="1 12">Helicase loading protein</fullName>
    </alternativeName>
</protein>
<accession>P13342</accession>
<dbReference type="EMBL" id="X15818">
    <property type="protein sequence ID" value="CAA33815.1"/>
    <property type="molecule type" value="Genomic_DNA"/>
</dbReference>
<dbReference type="EMBL" id="AF158101">
    <property type="protein sequence ID" value="AAD42503.1"/>
    <property type="molecule type" value="Genomic_DNA"/>
</dbReference>
<dbReference type="PIR" id="S05559">
    <property type="entry name" value="GMBPT4"/>
</dbReference>
<dbReference type="RefSeq" id="NP_049856.1">
    <property type="nucleotide sequence ID" value="NC_000866.4"/>
</dbReference>
<dbReference type="PDB" id="1C1K">
    <property type="method" value="X-ray"/>
    <property type="resolution" value="1.45 A"/>
    <property type="chains" value="A=1-217"/>
</dbReference>
<dbReference type="PDBsum" id="1C1K"/>
<dbReference type="SMR" id="P13342"/>
<dbReference type="GeneID" id="1258623"/>
<dbReference type="KEGG" id="vg:1258623"/>
<dbReference type="OrthoDB" id="7067at10239"/>
<dbReference type="EvolutionaryTrace" id="P13342"/>
<dbReference type="Proteomes" id="UP000009087">
    <property type="component" value="Segment"/>
</dbReference>
<dbReference type="GO" id="GO:0003677">
    <property type="term" value="F:DNA binding"/>
    <property type="evidence" value="ECO:0007669"/>
    <property type="project" value="UniProtKB-KW"/>
</dbReference>
<dbReference type="GO" id="GO:0039686">
    <property type="term" value="P:bidirectional double-stranded viral DNA replication"/>
    <property type="evidence" value="ECO:0000314"/>
    <property type="project" value="UniProtKB"/>
</dbReference>
<dbReference type="GO" id="GO:0006260">
    <property type="term" value="P:DNA replication"/>
    <property type="evidence" value="ECO:0007669"/>
    <property type="project" value="UniProtKB-KW"/>
</dbReference>
<dbReference type="FunFam" id="1.10.220.50:FF:000001">
    <property type="entry name" value="Loader of gp41 DNA helicase"/>
    <property type="match status" value="1"/>
</dbReference>
<dbReference type="Gene3D" id="1.10.8.60">
    <property type="match status" value="1"/>
</dbReference>
<dbReference type="Gene3D" id="1.10.220.50">
    <property type="entry name" value="Bacteriophage T4, Gp59, helicase assembly protein, C-terminal domain"/>
    <property type="match status" value="1"/>
</dbReference>
<dbReference type="HAMAP" id="MF_04156">
    <property type="entry name" value="HELIC_LOADER_T4"/>
    <property type="match status" value="1"/>
</dbReference>
<dbReference type="InterPro" id="IPR008944">
    <property type="entry name" value="Phage_T4_Gp59"/>
</dbReference>
<dbReference type="InterPro" id="IPR015086">
    <property type="entry name" value="Phage_T4_Gp59_C"/>
</dbReference>
<dbReference type="InterPro" id="IPR037082">
    <property type="entry name" value="Phage_T4_Gp59_C_sf"/>
</dbReference>
<dbReference type="InterPro" id="IPR023197">
    <property type="entry name" value="Phage_T4_Gp59_dom_sf"/>
</dbReference>
<dbReference type="InterPro" id="IPR015085">
    <property type="entry name" value="Phage_T4_Gp59_N"/>
</dbReference>
<dbReference type="Pfam" id="PF08994">
    <property type="entry name" value="T4_Gp59_C"/>
    <property type="match status" value="1"/>
</dbReference>
<dbReference type="Pfam" id="PF08993">
    <property type="entry name" value="T4_Gp59_N"/>
    <property type="match status" value="1"/>
</dbReference>
<dbReference type="PIRSF" id="PIRSF004374">
    <property type="entry name" value="Phage-associated_Gp59"/>
    <property type="match status" value="1"/>
</dbReference>
<dbReference type="SUPFAM" id="SSF48493">
    <property type="entry name" value="gene 59 helicase assembly protein"/>
    <property type="match status" value="1"/>
</dbReference>
<comment type="function">
    <text evidence="1 3 4 9 11 13">DNA helicase loader protein that participates in viral DNA replication, recombination, and repair (PubMed:10871615). At the fork, required for loading of the replicative helicase onto DNA protected by the ssDNA-binding protein (PubMed:10871615, PubMed:11459967, PubMed:22427673, PubMed:7806533). Coordinates simultaneous synthesis of leading- and lagging-strands (PubMed:11459969).</text>
</comment>
<comment type="subunit">
    <text evidence="1 2 3 4 5 6 7 8 9 10 11">Monomer (PubMed:19700405). Homohexamer; when associated with DNA (PubMed:19700405). Interacts (via C-terminus) with the DnaB-like replicative helicase (via C-terminus); this interaction brings about the rapid assembly of the helicase onto ssDNA (PubMed:10871615, PubMed:11459967, PubMed:22427673, PubMed:7806533). Interacts (via C-terminus) with the single-stranded DNA-binding protein; a ternary complex between the helicase assembly protein, the single-stranded DNA-binding protein and ssDNA is an obligatory intermediate in the helicase loading mechanism (PubMed:11459967, PubMed:15507125, PubMed:22427673, PubMed:24338568, PubMed:7806533). Interacts with the viral DNA polymerase (PubMed:15909989). Binds to single and double-stranded DNA (PubMed:10669611). Part of the replicase complex that includes the DNA polymerase, the polymerase clamp, the clamp loader complex, the single-stranded DNA binding protein (SSB), the primase, the DnaB-like replicative helicase and the helicase assembly factor (PubMed:16800624).</text>
</comment>
<comment type="similarity">
    <text evidence="1 16">Belongs to the Tequatrovirus DNA helicase assembly protein family.</text>
</comment>
<organism>
    <name type="scientific">Enterobacteria phage T4</name>
    <name type="common">Bacteriophage T4</name>
    <dbReference type="NCBI Taxonomy" id="10665"/>
    <lineage>
        <taxon>Viruses</taxon>
        <taxon>Duplodnaviria</taxon>
        <taxon>Heunggongvirae</taxon>
        <taxon>Uroviricota</taxon>
        <taxon>Caudoviricetes</taxon>
        <taxon>Straboviridae</taxon>
        <taxon>Tevenvirinae</taxon>
        <taxon>Tequatrovirus</taxon>
    </lineage>
</organism>
<keyword id="KW-0002">3D-structure</keyword>
<keyword id="KW-0903">Direct protein sequencing</keyword>
<keyword id="KW-0235">DNA replication</keyword>
<keyword id="KW-0238">DNA-binding</keyword>
<keyword id="KW-1185">Reference proteome</keyword>
<keyword id="KW-1194">Viral DNA replication</keyword>
<evidence type="ECO:0000255" key="1">
    <source>
        <dbReference type="HAMAP-Rule" id="MF_04156"/>
    </source>
</evidence>
<evidence type="ECO:0000269" key="2">
    <source>
    </source>
</evidence>
<evidence type="ECO:0000269" key="3">
    <source>
    </source>
</evidence>
<evidence type="ECO:0000269" key="4">
    <source>
    </source>
</evidence>
<evidence type="ECO:0000269" key="5">
    <source>
    </source>
</evidence>
<evidence type="ECO:0000269" key="6">
    <source>
    </source>
</evidence>
<evidence type="ECO:0000269" key="7">
    <source>
    </source>
</evidence>
<evidence type="ECO:0000269" key="8">
    <source>
    </source>
</evidence>
<evidence type="ECO:0000269" key="9">
    <source>
    </source>
</evidence>
<evidence type="ECO:0000269" key="10">
    <source>
    </source>
</evidence>
<evidence type="ECO:0000269" key="11">
    <source>
    </source>
</evidence>
<evidence type="ECO:0000303" key="12">
    <source>
    </source>
</evidence>
<evidence type="ECO:0000303" key="13">
    <source>
    </source>
</evidence>
<evidence type="ECO:0000303" key="14">
    <source>
    </source>
</evidence>
<evidence type="ECO:0000303" key="15">
    <source>
    </source>
</evidence>
<evidence type="ECO:0000305" key="16"/>
<evidence type="ECO:0007744" key="17">
    <source>
        <dbReference type="PDB" id="1C1K"/>
    </source>
</evidence>
<evidence type="ECO:0007829" key="18">
    <source>
        <dbReference type="PDB" id="1C1K"/>
    </source>
</evidence>
<sequence length="217" mass="25997">MIKLRMPAGGERYIDGKSVYKLYLMIKQHMNGKYDVIKYNWCMRVSDAAYQKRRDKYFFQKLSEKYKLKELALIFISNLVANQDAWIGDISDADALVFYREYIGRLKQIKFKFEEDIRNIYYFSKKVEVSAFKEIFEYNPKVQSSYIFKLLQSNIISFETFILLDSFLNIIDKHDEQTDNLVWNNYSIKLKAYRKILNIDSQKAKNVFIETVKSCKY</sequence>
<organismHost>
    <name type="scientific">Escherichia coli</name>
    <dbReference type="NCBI Taxonomy" id="562"/>
</organismHost>
<gene>
    <name evidence="1" type="primary">59</name>
</gene>
<feature type="chain" id="PRO_0000165046" description="DNA helicase assembly protein">
    <location>
        <begin position="1"/>
        <end position="217"/>
    </location>
</feature>
<feature type="mutagenesis site" description="Impaired DNA-binding." evidence="9">
    <original>K</original>
    <variation>E</variation>
    <location>
        <position position="27"/>
    </location>
</feature>
<feature type="mutagenesis site" description="Impaired DNA-binding." evidence="9">
    <original>K</original>
    <variation>A</variation>
    <location>
        <position position="38"/>
    </location>
</feature>
<feature type="mutagenesis site" description="Impaired DNA-binding." evidence="9">
    <original>Y</original>
    <variation>A</variation>
    <location>
        <position position="39"/>
    </location>
</feature>
<feature type="mutagenesis site" description="Impaired DNA-binding." evidence="9">
    <original>D</original>
    <variation>G</variation>
    <location>
        <position position="47"/>
    </location>
</feature>
<feature type="mutagenesis site" description="Impaired DNA-binding but loads helicase normally onto ssDNA covered with SSB." evidence="9 10">
    <original>I</original>
    <variation>A</variation>
    <location>
        <position position="87"/>
    </location>
</feature>
<feature type="mutagenesis site" description="Impaired interaction with the DnaB-like replicative helicase." evidence="9">
    <original>Y</original>
    <variation>A</variation>
    <location>
        <position position="122"/>
    </location>
</feature>
<feature type="mutagenesis site" description="Impaired interaction with SSB." evidence="9">
    <original>Y</original>
    <variation>A</variation>
    <location>
        <position position="138"/>
    </location>
</feature>
<feature type="mutagenesis site" description="Impaired interaction with SSB." evidence="9">
    <original>N</original>
    <variation>A</variation>
    <location>
        <position position="139"/>
    </location>
</feature>
<feature type="mutagenesis site" description="Impaired DNA-binding." evidence="9">
    <original>Y</original>
    <variation>A</variation>
    <location>
        <position position="193"/>
    </location>
</feature>
<feature type="mutagenesis site" description="Impaired DNA-binding." evidence="9">
    <original>V</original>
    <variation>A</variation>
    <location>
        <position position="207"/>
    </location>
</feature>
<feature type="mutagenesis site" description="Impaired interaction with SSB." evidence="9">
    <original>K</original>
    <variation>A</variation>
    <location>
        <position position="216"/>
    </location>
</feature>
<feature type="mutagenesis site" description="Impaired interaction with SSB." evidence="9">
    <original>Y</original>
    <variation>A</variation>
    <location>
        <position position="217"/>
    </location>
</feature>
<feature type="strand" evidence="18">
    <location>
        <begin position="2"/>
        <end position="4"/>
    </location>
</feature>
<feature type="helix" evidence="18">
    <location>
        <begin position="16"/>
        <end position="30"/>
    </location>
</feature>
<feature type="turn" evidence="18">
    <location>
        <begin position="36"/>
        <end position="41"/>
    </location>
</feature>
<feature type="helix" evidence="18">
    <location>
        <begin position="47"/>
        <end position="52"/>
    </location>
</feature>
<feature type="helix" evidence="18">
    <location>
        <begin position="56"/>
        <end position="65"/>
    </location>
</feature>
<feature type="helix" evidence="18">
    <location>
        <begin position="68"/>
        <end position="81"/>
    </location>
</feature>
<feature type="helix" evidence="18">
    <location>
        <begin position="83"/>
        <end position="86"/>
    </location>
</feature>
<feature type="helix" evidence="18">
    <location>
        <begin position="90"/>
        <end position="92"/>
    </location>
</feature>
<feature type="helix" evidence="18">
    <location>
        <begin position="95"/>
        <end position="107"/>
    </location>
</feature>
<feature type="helix" evidence="18">
    <location>
        <begin position="109"/>
        <end position="126"/>
    </location>
</feature>
<feature type="helix" evidence="18">
    <location>
        <begin position="132"/>
        <end position="135"/>
    </location>
</feature>
<feature type="turn" evidence="18">
    <location>
        <begin position="140"/>
        <end position="143"/>
    </location>
</feature>
<feature type="helix" evidence="18">
    <location>
        <begin position="146"/>
        <end position="152"/>
    </location>
</feature>
<feature type="helix" evidence="18">
    <location>
        <begin position="158"/>
        <end position="168"/>
    </location>
</feature>
<feature type="helix" evidence="18">
    <location>
        <begin position="170"/>
        <end position="177"/>
    </location>
</feature>
<feature type="helix" evidence="18">
    <location>
        <begin position="181"/>
        <end position="196"/>
    </location>
</feature>
<feature type="strand" evidence="18">
    <location>
        <begin position="197"/>
        <end position="199"/>
    </location>
</feature>
<feature type="helix" evidence="18">
    <location>
        <begin position="201"/>
        <end position="216"/>
    </location>
</feature>